<accession>B2SVL2</accession>
<protein>
    <recommendedName>
        <fullName evidence="1">NADH-quinone oxidoreductase subunit H</fullName>
        <ecNumber evidence="1">7.1.1.-</ecNumber>
    </recommendedName>
    <alternativeName>
        <fullName evidence="1">NADH dehydrogenase I subunit H</fullName>
    </alternativeName>
    <alternativeName>
        <fullName evidence="1">NDH-1 subunit H</fullName>
    </alternativeName>
</protein>
<keyword id="KW-0997">Cell inner membrane</keyword>
<keyword id="KW-1003">Cell membrane</keyword>
<keyword id="KW-0472">Membrane</keyword>
<keyword id="KW-0520">NAD</keyword>
<keyword id="KW-0874">Quinone</keyword>
<keyword id="KW-1278">Translocase</keyword>
<keyword id="KW-0812">Transmembrane</keyword>
<keyword id="KW-1133">Transmembrane helix</keyword>
<keyword id="KW-0830">Ubiquinone</keyword>
<name>NUOH_XANOP</name>
<feature type="chain" id="PRO_1000143623" description="NADH-quinone oxidoreductase subunit H">
    <location>
        <begin position="1"/>
        <end position="363"/>
    </location>
</feature>
<feature type="transmembrane region" description="Helical" evidence="1">
    <location>
        <begin position="29"/>
        <end position="49"/>
    </location>
</feature>
<feature type="transmembrane region" description="Helical" evidence="1">
    <location>
        <begin position="62"/>
        <end position="82"/>
    </location>
</feature>
<feature type="transmembrane region" description="Helical" evidence="1">
    <location>
        <begin position="96"/>
        <end position="116"/>
    </location>
</feature>
<feature type="transmembrane region" description="Helical" evidence="1">
    <location>
        <begin position="127"/>
        <end position="147"/>
    </location>
</feature>
<feature type="transmembrane region" description="Helical" evidence="1">
    <location>
        <begin position="163"/>
        <end position="183"/>
    </location>
</feature>
<feature type="transmembrane region" description="Helical" evidence="1">
    <location>
        <begin position="202"/>
        <end position="222"/>
    </location>
</feature>
<feature type="transmembrane region" description="Helical" evidence="1">
    <location>
        <begin position="238"/>
        <end position="257"/>
    </location>
</feature>
<feature type="transmembrane region" description="Helical" evidence="1">
    <location>
        <begin position="264"/>
        <end position="286"/>
    </location>
</feature>
<feature type="transmembrane region" description="Helical" evidence="1">
    <location>
        <begin position="299"/>
        <end position="319"/>
    </location>
</feature>
<feature type="transmembrane region" description="Helical" evidence="1">
    <location>
        <begin position="339"/>
        <end position="359"/>
    </location>
</feature>
<organism>
    <name type="scientific">Xanthomonas oryzae pv. oryzae (strain PXO99A)</name>
    <dbReference type="NCBI Taxonomy" id="360094"/>
    <lineage>
        <taxon>Bacteria</taxon>
        <taxon>Pseudomonadati</taxon>
        <taxon>Pseudomonadota</taxon>
        <taxon>Gammaproteobacteria</taxon>
        <taxon>Lysobacterales</taxon>
        <taxon>Lysobacteraceae</taxon>
        <taxon>Xanthomonas</taxon>
    </lineage>
</organism>
<comment type="function">
    <text evidence="1">NDH-1 shuttles electrons from NADH, via FMN and iron-sulfur (Fe-S) centers, to quinones in the respiratory chain. The immediate electron acceptor for the enzyme in this species is believed to be ubiquinone. Couples the redox reaction to proton translocation (for every two electrons transferred, four hydrogen ions are translocated across the cytoplasmic membrane), and thus conserves the redox energy in a proton gradient. This subunit may bind ubiquinone.</text>
</comment>
<comment type="catalytic activity">
    <reaction evidence="1">
        <text>a quinone + NADH + 5 H(+)(in) = a quinol + NAD(+) + 4 H(+)(out)</text>
        <dbReference type="Rhea" id="RHEA:57888"/>
        <dbReference type="ChEBI" id="CHEBI:15378"/>
        <dbReference type="ChEBI" id="CHEBI:24646"/>
        <dbReference type="ChEBI" id="CHEBI:57540"/>
        <dbReference type="ChEBI" id="CHEBI:57945"/>
        <dbReference type="ChEBI" id="CHEBI:132124"/>
    </reaction>
</comment>
<comment type="subunit">
    <text evidence="1">NDH-1 is composed of 14 different subunits. Subunits NuoA, H, J, K, L, M, N constitute the membrane sector of the complex.</text>
</comment>
<comment type="subcellular location">
    <subcellularLocation>
        <location evidence="1">Cell inner membrane</location>
        <topology evidence="1">Multi-pass membrane protein</topology>
    </subcellularLocation>
</comment>
<comment type="similarity">
    <text evidence="1">Belongs to the complex I subunit 1 family.</text>
</comment>
<evidence type="ECO:0000255" key="1">
    <source>
        <dbReference type="HAMAP-Rule" id="MF_01350"/>
    </source>
</evidence>
<proteinExistence type="inferred from homology"/>
<sequence>MNELLLNLVDPLHQWFLGLGDGGVVLWSVLKILLIAVPVIVSVAFYVVWERKLIGWMHVRHGPMYVGMGIFQAFADVFKLLFKEILQPSSSHKAMFIIAPLLTLAPAFAAWSVVPFDAKLVLSNANVGLLYLLAMTSLGVYGIILAGWASNSKYAFLGAMRSAAQVVSYEIAMGFALVGVMIASGSVNLSQIVFAQAGNSGFFDWFLIPLFPLFIVYWVSGVAETNRAPFDVVEGESEIVAGHMVEYSGGAFALFFLAEYANMILVSFLISIFFLGGWLSPIQGWVNADISPWIDWLWKGGWPWLLMKVFFFASAYIWFRASFPRYRYDQIMRLGWKVFIPLTIVWIAVTALMVFYGVIQKGV</sequence>
<reference key="1">
    <citation type="journal article" date="2008" name="BMC Genomics">
        <title>Genome sequence and rapid evolution of the rice pathogen Xanthomonas oryzae pv. oryzae PXO99A.</title>
        <authorList>
            <person name="Salzberg S.L."/>
            <person name="Sommer D.D."/>
            <person name="Schatz M.C."/>
            <person name="Phillippy A.M."/>
            <person name="Rabinowicz P.D."/>
            <person name="Tsuge S."/>
            <person name="Furutani A."/>
            <person name="Ochiai H."/>
            <person name="Delcher A.L."/>
            <person name="Kelley D."/>
            <person name="Madupu R."/>
            <person name="Puiu D."/>
            <person name="Radune D."/>
            <person name="Shumway M."/>
            <person name="Trapnell C."/>
            <person name="Aparna G."/>
            <person name="Jha G."/>
            <person name="Pandey A."/>
            <person name="Patil P.B."/>
            <person name="Ishihara H."/>
            <person name="Meyer D.F."/>
            <person name="Szurek B."/>
            <person name="Verdier V."/>
            <person name="Koebnik R."/>
            <person name="Dow J.M."/>
            <person name="Ryan R.P."/>
            <person name="Hirata H."/>
            <person name="Tsuyumu S."/>
            <person name="Won Lee S."/>
            <person name="Seo Y.-S."/>
            <person name="Sriariyanum M."/>
            <person name="Ronald P.C."/>
            <person name="Sonti R.V."/>
            <person name="Van Sluys M.-A."/>
            <person name="Leach J.E."/>
            <person name="White F.F."/>
            <person name="Bogdanove A.J."/>
        </authorList>
    </citation>
    <scope>NUCLEOTIDE SEQUENCE [LARGE SCALE GENOMIC DNA]</scope>
    <source>
        <strain>PXO99A</strain>
    </source>
</reference>
<gene>
    <name evidence="1" type="primary">nuoH</name>
    <name type="ordered locus">PXO_01294</name>
</gene>
<dbReference type="EC" id="7.1.1.-" evidence="1"/>
<dbReference type="EMBL" id="CP000967">
    <property type="protein sequence ID" value="ACD60086.1"/>
    <property type="molecule type" value="Genomic_DNA"/>
</dbReference>
<dbReference type="RefSeq" id="WP_011259744.1">
    <property type="nucleotide sequence ID" value="NC_010717.2"/>
</dbReference>
<dbReference type="SMR" id="B2SVL2"/>
<dbReference type="GeneID" id="77336980"/>
<dbReference type="KEGG" id="xop:PXO_01294"/>
<dbReference type="eggNOG" id="COG1005">
    <property type="taxonomic scope" value="Bacteria"/>
</dbReference>
<dbReference type="HOGENOM" id="CLU_015134_0_1_6"/>
<dbReference type="Proteomes" id="UP000001740">
    <property type="component" value="Chromosome"/>
</dbReference>
<dbReference type="GO" id="GO:0005886">
    <property type="term" value="C:plasma membrane"/>
    <property type="evidence" value="ECO:0007669"/>
    <property type="project" value="UniProtKB-SubCell"/>
</dbReference>
<dbReference type="GO" id="GO:0003954">
    <property type="term" value="F:NADH dehydrogenase activity"/>
    <property type="evidence" value="ECO:0007669"/>
    <property type="project" value="TreeGrafter"/>
</dbReference>
<dbReference type="GO" id="GO:0016655">
    <property type="term" value="F:oxidoreductase activity, acting on NAD(P)H, quinone or similar compound as acceptor"/>
    <property type="evidence" value="ECO:0007669"/>
    <property type="project" value="UniProtKB-UniRule"/>
</dbReference>
<dbReference type="GO" id="GO:0048038">
    <property type="term" value="F:quinone binding"/>
    <property type="evidence" value="ECO:0007669"/>
    <property type="project" value="UniProtKB-KW"/>
</dbReference>
<dbReference type="GO" id="GO:0009060">
    <property type="term" value="P:aerobic respiration"/>
    <property type="evidence" value="ECO:0007669"/>
    <property type="project" value="TreeGrafter"/>
</dbReference>
<dbReference type="HAMAP" id="MF_01350">
    <property type="entry name" value="NDH1_NuoH"/>
    <property type="match status" value="1"/>
</dbReference>
<dbReference type="InterPro" id="IPR001694">
    <property type="entry name" value="NADH_UbQ_OxRdtase_su1/FPO"/>
</dbReference>
<dbReference type="InterPro" id="IPR018086">
    <property type="entry name" value="NADH_UbQ_OxRdtase_su1_CS"/>
</dbReference>
<dbReference type="NCBIfam" id="NF004741">
    <property type="entry name" value="PRK06076.1-2"/>
    <property type="match status" value="1"/>
</dbReference>
<dbReference type="NCBIfam" id="NF004742">
    <property type="entry name" value="PRK06076.1-3"/>
    <property type="match status" value="1"/>
</dbReference>
<dbReference type="PANTHER" id="PTHR11432">
    <property type="entry name" value="NADH DEHYDROGENASE SUBUNIT 1"/>
    <property type="match status" value="1"/>
</dbReference>
<dbReference type="PANTHER" id="PTHR11432:SF3">
    <property type="entry name" value="NADH-UBIQUINONE OXIDOREDUCTASE CHAIN 1"/>
    <property type="match status" value="1"/>
</dbReference>
<dbReference type="Pfam" id="PF00146">
    <property type="entry name" value="NADHdh"/>
    <property type="match status" value="1"/>
</dbReference>
<dbReference type="PROSITE" id="PS00668">
    <property type="entry name" value="COMPLEX1_ND1_2"/>
    <property type="match status" value="1"/>
</dbReference>